<comment type="function">
    <text evidence="1">Catalyzes the condensation of pantoate with beta-alanine in an ATP-dependent reaction via a pantoyl-adenylate intermediate.</text>
</comment>
<comment type="catalytic activity">
    <reaction evidence="1">
        <text>(R)-pantoate + beta-alanine + ATP = (R)-pantothenate + AMP + diphosphate + H(+)</text>
        <dbReference type="Rhea" id="RHEA:10912"/>
        <dbReference type="ChEBI" id="CHEBI:15378"/>
        <dbReference type="ChEBI" id="CHEBI:15980"/>
        <dbReference type="ChEBI" id="CHEBI:29032"/>
        <dbReference type="ChEBI" id="CHEBI:30616"/>
        <dbReference type="ChEBI" id="CHEBI:33019"/>
        <dbReference type="ChEBI" id="CHEBI:57966"/>
        <dbReference type="ChEBI" id="CHEBI:456215"/>
        <dbReference type="EC" id="6.3.2.1"/>
    </reaction>
</comment>
<comment type="pathway">
    <text evidence="1">Cofactor biosynthesis; (R)-pantothenate biosynthesis; (R)-pantothenate from (R)-pantoate and beta-alanine: step 1/1.</text>
</comment>
<comment type="subunit">
    <text evidence="1">Homodimer.</text>
</comment>
<comment type="subcellular location">
    <subcellularLocation>
        <location evidence="1">Cytoplasm</location>
    </subcellularLocation>
</comment>
<comment type="miscellaneous">
    <text evidence="1">The reaction proceeds by a bi uni uni bi ping pong mechanism.</text>
</comment>
<comment type="similarity">
    <text evidence="1">Belongs to the pantothenate synthetase family.</text>
</comment>
<dbReference type="EC" id="6.3.2.1" evidence="1"/>
<dbReference type="EMBL" id="AE017262">
    <property type="protein sequence ID" value="AAT04700.1"/>
    <property type="molecule type" value="Genomic_DNA"/>
</dbReference>
<dbReference type="RefSeq" id="WP_003726617.1">
    <property type="nucleotide sequence ID" value="NC_002973.6"/>
</dbReference>
<dbReference type="SMR" id="Q71YB4"/>
<dbReference type="KEGG" id="lmf:LMOf2365_1930"/>
<dbReference type="HOGENOM" id="CLU_047148_0_0_9"/>
<dbReference type="UniPathway" id="UPA00028">
    <property type="reaction ID" value="UER00005"/>
</dbReference>
<dbReference type="GO" id="GO:0005829">
    <property type="term" value="C:cytosol"/>
    <property type="evidence" value="ECO:0007669"/>
    <property type="project" value="TreeGrafter"/>
</dbReference>
<dbReference type="GO" id="GO:0005524">
    <property type="term" value="F:ATP binding"/>
    <property type="evidence" value="ECO:0007669"/>
    <property type="project" value="UniProtKB-KW"/>
</dbReference>
<dbReference type="GO" id="GO:0004592">
    <property type="term" value="F:pantoate-beta-alanine ligase activity"/>
    <property type="evidence" value="ECO:0007669"/>
    <property type="project" value="UniProtKB-UniRule"/>
</dbReference>
<dbReference type="GO" id="GO:0015940">
    <property type="term" value="P:pantothenate biosynthetic process"/>
    <property type="evidence" value="ECO:0007669"/>
    <property type="project" value="UniProtKB-UniRule"/>
</dbReference>
<dbReference type="CDD" id="cd00560">
    <property type="entry name" value="PanC"/>
    <property type="match status" value="1"/>
</dbReference>
<dbReference type="FunFam" id="3.30.1300.10:FF:000001">
    <property type="entry name" value="Pantothenate synthetase"/>
    <property type="match status" value="1"/>
</dbReference>
<dbReference type="FunFam" id="3.40.50.620:FF:000013">
    <property type="entry name" value="Pantothenate synthetase"/>
    <property type="match status" value="1"/>
</dbReference>
<dbReference type="Gene3D" id="3.40.50.620">
    <property type="entry name" value="HUPs"/>
    <property type="match status" value="1"/>
</dbReference>
<dbReference type="Gene3D" id="3.30.1300.10">
    <property type="entry name" value="Pantoate-beta-alanine ligase, C-terminal domain"/>
    <property type="match status" value="1"/>
</dbReference>
<dbReference type="HAMAP" id="MF_00158">
    <property type="entry name" value="PanC"/>
    <property type="match status" value="1"/>
</dbReference>
<dbReference type="InterPro" id="IPR004821">
    <property type="entry name" value="Cyt_trans-like"/>
</dbReference>
<dbReference type="InterPro" id="IPR003721">
    <property type="entry name" value="Pantoate_ligase"/>
</dbReference>
<dbReference type="InterPro" id="IPR042176">
    <property type="entry name" value="Pantoate_ligase_C"/>
</dbReference>
<dbReference type="InterPro" id="IPR014729">
    <property type="entry name" value="Rossmann-like_a/b/a_fold"/>
</dbReference>
<dbReference type="NCBIfam" id="TIGR00125">
    <property type="entry name" value="cyt_tran_rel"/>
    <property type="match status" value="1"/>
</dbReference>
<dbReference type="NCBIfam" id="TIGR00018">
    <property type="entry name" value="panC"/>
    <property type="match status" value="1"/>
</dbReference>
<dbReference type="PANTHER" id="PTHR21299">
    <property type="entry name" value="CYTIDYLATE KINASE/PANTOATE-BETA-ALANINE LIGASE"/>
    <property type="match status" value="1"/>
</dbReference>
<dbReference type="PANTHER" id="PTHR21299:SF1">
    <property type="entry name" value="PANTOATE--BETA-ALANINE LIGASE"/>
    <property type="match status" value="1"/>
</dbReference>
<dbReference type="Pfam" id="PF02569">
    <property type="entry name" value="Pantoate_ligase"/>
    <property type="match status" value="1"/>
</dbReference>
<dbReference type="SUPFAM" id="SSF52374">
    <property type="entry name" value="Nucleotidylyl transferase"/>
    <property type="match status" value="1"/>
</dbReference>
<name>PANC_LISMF</name>
<feature type="chain" id="PRO_0000128240" description="Pantothenate synthetase">
    <location>
        <begin position="1"/>
        <end position="285"/>
    </location>
</feature>
<feature type="active site" description="Proton donor" evidence="1">
    <location>
        <position position="37"/>
    </location>
</feature>
<feature type="binding site" evidence="1">
    <location>
        <begin position="30"/>
        <end position="37"/>
    </location>
    <ligand>
        <name>ATP</name>
        <dbReference type="ChEBI" id="CHEBI:30616"/>
    </ligand>
</feature>
<feature type="binding site" evidence="1">
    <location>
        <position position="61"/>
    </location>
    <ligand>
        <name>(R)-pantoate</name>
        <dbReference type="ChEBI" id="CHEBI:15980"/>
    </ligand>
</feature>
<feature type="binding site" evidence="1">
    <location>
        <position position="61"/>
    </location>
    <ligand>
        <name>beta-alanine</name>
        <dbReference type="ChEBI" id="CHEBI:57966"/>
    </ligand>
</feature>
<feature type="binding site" evidence="1">
    <location>
        <begin position="147"/>
        <end position="150"/>
    </location>
    <ligand>
        <name>ATP</name>
        <dbReference type="ChEBI" id="CHEBI:30616"/>
    </ligand>
</feature>
<feature type="binding site" evidence="1">
    <location>
        <position position="153"/>
    </location>
    <ligand>
        <name>(R)-pantoate</name>
        <dbReference type="ChEBI" id="CHEBI:15980"/>
    </ligand>
</feature>
<feature type="binding site" evidence="1">
    <location>
        <position position="176"/>
    </location>
    <ligand>
        <name>ATP</name>
        <dbReference type="ChEBI" id="CHEBI:30616"/>
    </ligand>
</feature>
<feature type="binding site" evidence="1">
    <location>
        <begin position="184"/>
        <end position="187"/>
    </location>
    <ligand>
        <name>ATP</name>
        <dbReference type="ChEBI" id="CHEBI:30616"/>
    </ligand>
</feature>
<proteinExistence type="inferred from homology"/>
<evidence type="ECO:0000255" key="1">
    <source>
        <dbReference type="HAMAP-Rule" id="MF_00158"/>
    </source>
</evidence>
<gene>
    <name evidence="1" type="primary">panC</name>
    <name type="ordered locus">LMOf2365_1930</name>
</gene>
<reference key="1">
    <citation type="journal article" date="2004" name="Nucleic Acids Res.">
        <title>Whole genome comparisons of serotype 4b and 1/2a strains of the food-borne pathogen Listeria monocytogenes reveal new insights into the core genome components of this species.</title>
        <authorList>
            <person name="Nelson K.E."/>
            <person name="Fouts D.E."/>
            <person name="Mongodin E.F."/>
            <person name="Ravel J."/>
            <person name="DeBoy R.T."/>
            <person name="Kolonay J.F."/>
            <person name="Rasko D.A."/>
            <person name="Angiuoli S.V."/>
            <person name="Gill S.R."/>
            <person name="Paulsen I.T."/>
            <person name="Peterson J.D."/>
            <person name="White O."/>
            <person name="Nelson W.C."/>
            <person name="Nierman W.C."/>
            <person name="Beanan M.J."/>
            <person name="Brinkac L.M."/>
            <person name="Daugherty S.C."/>
            <person name="Dodson R.J."/>
            <person name="Durkin A.S."/>
            <person name="Madupu R."/>
            <person name="Haft D.H."/>
            <person name="Selengut J."/>
            <person name="Van Aken S.E."/>
            <person name="Khouri H.M."/>
            <person name="Fedorova N."/>
            <person name="Forberger H.A."/>
            <person name="Tran B."/>
            <person name="Kathariou S."/>
            <person name="Wonderling L.D."/>
            <person name="Uhlich G.A."/>
            <person name="Bayles D.O."/>
            <person name="Luchansky J.B."/>
            <person name="Fraser C.M."/>
        </authorList>
    </citation>
    <scope>NUCLEOTIDE SEQUENCE [LARGE SCALE GENOMIC DNA]</scope>
    <source>
        <strain>F2365</strain>
    </source>
</reference>
<protein>
    <recommendedName>
        <fullName evidence="1">Pantothenate synthetase</fullName>
        <shortName evidence="1">PS</shortName>
        <ecNumber evidence="1">6.3.2.1</ecNumber>
    </recommendedName>
    <alternativeName>
        <fullName evidence="1">Pantoate--beta-alanine ligase</fullName>
    </alternativeName>
    <alternativeName>
        <fullName evidence="1">Pantoate-activating enzyme</fullName>
    </alternativeName>
</protein>
<accession>Q71YB4</accession>
<organism>
    <name type="scientific">Listeria monocytogenes serotype 4b (strain F2365)</name>
    <dbReference type="NCBI Taxonomy" id="265669"/>
    <lineage>
        <taxon>Bacteria</taxon>
        <taxon>Bacillati</taxon>
        <taxon>Bacillota</taxon>
        <taxon>Bacilli</taxon>
        <taxon>Bacillales</taxon>
        <taxon>Listeriaceae</taxon>
        <taxon>Listeria</taxon>
    </lineage>
</organism>
<sequence>MLIIRNKQDLKEAILEQKKANKTIGYVPTMGFLHEGHMTLVSHARKETDFVVMSVFVNPTQFGPNEDFDAYPRDEAHDAKLAEEGGVDILFVPTVEEIYPTELATKLHVIKRVSVLDGADREGHFDGVVTVLTKLFHLVNPDNAYFGQKDAQQVAVVSGLVEDYFFPINLRIIATVREADGLAKSSRNVYLTEKERKEAPVIHEALQLGRELIESGETNEAKIVQVMTDKINEQPSHENIAYLALYSYPEFTPVTDWTKGIIIAAAVKYSKARLIDNELINVKRR</sequence>
<keyword id="KW-0067">ATP-binding</keyword>
<keyword id="KW-0963">Cytoplasm</keyword>
<keyword id="KW-0436">Ligase</keyword>
<keyword id="KW-0547">Nucleotide-binding</keyword>
<keyword id="KW-0566">Pantothenate biosynthesis</keyword>